<protein>
    <recommendedName>
        <fullName evidence="1">Holliday junction branch migration complex subunit RuvB</fullName>
        <ecNumber evidence="1">3.6.4.-</ecNumber>
    </recommendedName>
</protein>
<proteinExistence type="evidence at protein level"/>
<evidence type="ECO:0000255" key="1">
    <source>
        <dbReference type="HAMAP-Rule" id="MF_00016"/>
    </source>
</evidence>
<accession>Q97SR6</accession>
<name>RUVB_STRPN</name>
<dbReference type="EC" id="3.6.4.-" evidence="1"/>
<dbReference type="EMBL" id="AE005672">
    <property type="protein sequence ID" value="AAK74437.1"/>
    <property type="molecule type" value="Genomic_DNA"/>
</dbReference>
<dbReference type="PIR" id="D95030">
    <property type="entry name" value="D95030"/>
</dbReference>
<dbReference type="RefSeq" id="WP_001808442.1">
    <property type="nucleotide sequence ID" value="NZ_CP155539.1"/>
</dbReference>
<dbReference type="SMR" id="Q97SR6"/>
<dbReference type="IntAct" id="Q97SR6">
    <property type="interactions" value="6"/>
</dbReference>
<dbReference type="PaxDb" id="170187-SP_0259"/>
<dbReference type="EnsemblBacteria" id="AAK74437">
    <property type="protein sequence ID" value="AAK74437"/>
    <property type="gene ID" value="SP_0259"/>
</dbReference>
<dbReference type="KEGG" id="spn:SP_0259"/>
<dbReference type="eggNOG" id="COG2255">
    <property type="taxonomic scope" value="Bacteria"/>
</dbReference>
<dbReference type="PhylomeDB" id="Q97SR6"/>
<dbReference type="BioCyc" id="SPNE170187:G1FZB-266-MONOMER"/>
<dbReference type="Proteomes" id="UP000000585">
    <property type="component" value="Chromosome"/>
</dbReference>
<dbReference type="GO" id="GO:0005737">
    <property type="term" value="C:cytoplasm"/>
    <property type="evidence" value="ECO:0007669"/>
    <property type="project" value="UniProtKB-SubCell"/>
</dbReference>
<dbReference type="GO" id="GO:0048476">
    <property type="term" value="C:Holliday junction resolvase complex"/>
    <property type="evidence" value="ECO:0007669"/>
    <property type="project" value="UniProtKB-UniRule"/>
</dbReference>
<dbReference type="GO" id="GO:0005524">
    <property type="term" value="F:ATP binding"/>
    <property type="evidence" value="ECO:0007669"/>
    <property type="project" value="UniProtKB-UniRule"/>
</dbReference>
<dbReference type="GO" id="GO:0016887">
    <property type="term" value="F:ATP hydrolysis activity"/>
    <property type="evidence" value="ECO:0007669"/>
    <property type="project" value="InterPro"/>
</dbReference>
<dbReference type="GO" id="GO:0000400">
    <property type="term" value="F:four-way junction DNA binding"/>
    <property type="evidence" value="ECO:0007669"/>
    <property type="project" value="UniProtKB-UniRule"/>
</dbReference>
<dbReference type="GO" id="GO:0009378">
    <property type="term" value="F:four-way junction helicase activity"/>
    <property type="evidence" value="ECO:0007669"/>
    <property type="project" value="InterPro"/>
</dbReference>
<dbReference type="GO" id="GO:0006310">
    <property type="term" value="P:DNA recombination"/>
    <property type="evidence" value="ECO:0007669"/>
    <property type="project" value="UniProtKB-UniRule"/>
</dbReference>
<dbReference type="GO" id="GO:0006281">
    <property type="term" value="P:DNA repair"/>
    <property type="evidence" value="ECO:0007669"/>
    <property type="project" value="UniProtKB-UniRule"/>
</dbReference>
<dbReference type="CDD" id="cd00009">
    <property type="entry name" value="AAA"/>
    <property type="match status" value="1"/>
</dbReference>
<dbReference type="Gene3D" id="1.10.8.60">
    <property type="match status" value="1"/>
</dbReference>
<dbReference type="Gene3D" id="3.40.50.300">
    <property type="entry name" value="P-loop containing nucleotide triphosphate hydrolases"/>
    <property type="match status" value="1"/>
</dbReference>
<dbReference type="Gene3D" id="1.10.10.10">
    <property type="entry name" value="Winged helix-like DNA-binding domain superfamily/Winged helix DNA-binding domain"/>
    <property type="match status" value="1"/>
</dbReference>
<dbReference type="HAMAP" id="MF_00016">
    <property type="entry name" value="DNA_HJ_migration_RuvB"/>
    <property type="match status" value="1"/>
</dbReference>
<dbReference type="InterPro" id="IPR003593">
    <property type="entry name" value="AAA+_ATPase"/>
</dbReference>
<dbReference type="InterPro" id="IPR041445">
    <property type="entry name" value="AAA_lid_4"/>
</dbReference>
<dbReference type="InterPro" id="IPR004605">
    <property type="entry name" value="DNA_helicase_Holl-junc_RuvB"/>
</dbReference>
<dbReference type="InterPro" id="IPR027417">
    <property type="entry name" value="P-loop_NTPase"/>
</dbReference>
<dbReference type="InterPro" id="IPR008824">
    <property type="entry name" value="RuvB-like_N"/>
</dbReference>
<dbReference type="InterPro" id="IPR008823">
    <property type="entry name" value="RuvB_C"/>
</dbReference>
<dbReference type="InterPro" id="IPR036388">
    <property type="entry name" value="WH-like_DNA-bd_sf"/>
</dbReference>
<dbReference type="InterPro" id="IPR036390">
    <property type="entry name" value="WH_DNA-bd_sf"/>
</dbReference>
<dbReference type="NCBIfam" id="NF000868">
    <property type="entry name" value="PRK00080.1"/>
    <property type="match status" value="1"/>
</dbReference>
<dbReference type="NCBIfam" id="TIGR00635">
    <property type="entry name" value="ruvB"/>
    <property type="match status" value="1"/>
</dbReference>
<dbReference type="PANTHER" id="PTHR42848">
    <property type="match status" value="1"/>
</dbReference>
<dbReference type="PANTHER" id="PTHR42848:SF1">
    <property type="entry name" value="HOLLIDAY JUNCTION BRANCH MIGRATION COMPLEX SUBUNIT RUVB"/>
    <property type="match status" value="1"/>
</dbReference>
<dbReference type="Pfam" id="PF17864">
    <property type="entry name" value="AAA_lid_4"/>
    <property type="match status" value="1"/>
</dbReference>
<dbReference type="Pfam" id="PF05491">
    <property type="entry name" value="RuvB_C"/>
    <property type="match status" value="1"/>
</dbReference>
<dbReference type="Pfam" id="PF05496">
    <property type="entry name" value="RuvB_N"/>
    <property type="match status" value="1"/>
</dbReference>
<dbReference type="SMART" id="SM00382">
    <property type="entry name" value="AAA"/>
    <property type="match status" value="1"/>
</dbReference>
<dbReference type="SUPFAM" id="SSF52540">
    <property type="entry name" value="P-loop containing nucleoside triphosphate hydrolases"/>
    <property type="match status" value="1"/>
</dbReference>
<dbReference type="SUPFAM" id="SSF46785">
    <property type="entry name" value="Winged helix' DNA-binding domain"/>
    <property type="match status" value="1"/>
</dbReference>
<sequence length="332" mass="37279">MSRILDNEMMGDEELVERTLRPQYLREYIGQDKVKDQLQIFIEAAKMRDEALDHVLLFGPPGLGKTTMAFVIANELGVNLKQTSGPVIEKAGDLVAILNDLEPGDVLFIDEIHRLPMSVEEVLYSAMEDFYIDIMIGAGEGSRSVHLELPPFTLIGATTRAGMLSNPLRARFGITGHMEYYAHADLTEIVERTADIFEMEITHEAASELALRSRGTPRIANRLLKRVRDFAQIMGNGVIDDVITDKALTMLDVDHEGLDYVDQKILRTMIEMYSGGPVGLGTLSVNIAEERETVEDMYEPYLIQKGFIMRTRSGRVATAKAYEHLGYEYSEK</sequence>
<keyword id="KW-0067">ATP-binding</keyword>
<keyword id="KW-0963">Cytoplasm</keyword>
<keyword id="KW-0227">DNA damage</keyword>
<keyword id="KW-0233">DNA recombination</keyword>
<keyword id="KW-0234">DNA repair</keyword>
<keyword id="KW-0238">DNA-binding</keyword>
<keyword id="KW-0378">Hydrolase</keyword>
<keyword id="KW-0547">Nucleotide-binding</keyword>
<keyword id="KW-1185">Reference proteome</keyword>
<reference key="1">
    <citation type="journal article" date="2001" name="Science">
        <title>Complete genome sequence of a virulent isolate of Streptococcus pneumoniae.</title>
        <authorList>
            <person name="Tettelin H."/>
            <person name="Nelson K.E."/>
            <person name="Paulsen I.T."/>
            <person name="Eisen J.A."/>
            <person name="Read T.D."/>
            <person name="Peterson S.N."/>
            <person name="Heidelberg J.F."/>
            <person name="DeBoy R.T."/>
            <person name="Haft D.H."/>
            <person name="Dodson R.J."/>
            <person name="Durkin A.S."/>
            <person name="Gwinn M.L."/>
            <person name="Kolonay J.F."/>
            <person name="Nelson W.C."/>
            <person name="Peterson J.D."/>
            <person name="Umayam L.A."/>
            <person name="White O."/>
            <person name="Salzberg S.L."/>
            <person name="Lewis M.R."/>
            <person name="Radune D."/>
            <person name="Holtzapple E.K."/>
            <person name="Khouri H.M."/>
            <person name="Wolf A.M."/>
            <person name="Utterback T.R."/>
            <person name="Hansen C.L."/>
            <person name="McDonald L.A."/>
            <person name="Feldblyum T.V."/>
            <person name="Angiuoli S.V."/>
            <person name="Dickinson T."/>
            <person name="Hickey E.K."/>
            <person name="Holt I.E."/>
            <person name="Loftus B.J."/>
            <person name="Yang F."/>
            <person name="Smith H.O."/>
            <person name="Venter J.C."/>
            <person name="Dougherty B.A."/>
            <person name="Morrison D.A."/>
            <person name="Hollingshead S.K."/>
            <person name="Fraser C.M."/>
        </authorList>
    </citation>
    <scope>NUCLEOTIDE SEQUENCE [LARGE SCALE GENOMIC DNA]</scope>
    <source>
        <strain>ATCC BAA-334 / TIGR4</strain>
    </source>
</reference>
<comment type="function">
    <text evidence="1">The RuvA-RuvB-RuvC complex processes Holliday junction (HJ) DNA during genetic recombination and DNA repair, while the RuvA-RuvB complex plays an important role in the rescue of blocked DNA replication forks via replication fork reversal (RFR). RuvA specifically binds to HJ cruciform DNA, conferring on it an open structure. The RuvB hexamer acts as an ATP-dependent pump, pulling dsDNA into and through the RuvAB complex. RuvB forms 2 homohexamers on either side of HJ DNA bound by 1 or 2 RuvA tetramers; 4 subunits per hexamer contact DNA at a time. Coordinated motions by a converter formed by DNA-disengaged RuvB subunits stimulates ATP hydrolysis and nucleotide exchange. Immobilization of the converter enables RuvB to convert the ATP-contained energy into a lever motion, pulling 2 nucleotides of DNA out of the RuvA tetramer per ATP hydrolyzed, thus driving DNA branch migration. The RuvB motors rotate together with the DNA substrate, which together with the progressing nucleotide cycle form the mechanistic basis for DNA recombination by continuous HJ branch migration. Branch migration allows RuvC to scan DNA until it finds its consensus sequence, where it cleaves and resolves cruciform DNA.</text>
</comment>
<comment type="catalytic activity">
    <reaction evidence="1">
        <text>ATP + H2O = ADP + phosphate + H(+)</text>
        <dbReference type="Rhea" id="RHEA:13065"/>
        <dbReference type="ChEBI" id="CHEBI:15377"/>
        <dbReference type="ChEBI" id="CHEBI:15378"/>
        <dbReference type="ChEBI" id="CHEBI:30616"/>
        <dbReference type="ChEBI" id="CHEBI:43474"/>
        <dbReference type="ChEBI" id="CHEBI:456216"/>
    </reaction>
</comment>
<comment type="subunit">
    <text evidence="1">Homohexamer. Forms an RuvA(8)-RuvB(12)-Holliday junction (HJ) complex. HJ DNA is sandwiched between 2 RuvA tetramers; dsDNA enters through RuvA and exits via RuvB. An RuvB hexamer assembles on each DNA strand where it exits the tetramer. Each RuvB hexamer is contacted by two RuvA subunits (via domain III) on 2 adjacent RuvB subunits; this complex drives branch migration. In the full resolvosome a probable DNA-RuvA(4)-RuvB(12)-RuvC(2) complex forms which resolves the HJ.</text>
</comment>
<comment type="interaction">
    <interactant intactId="EBI-11616013">
        <id>Q97SR6</id>
    </interactant>
    <interactant intactId="EBI-3990347">
        <id>Q38002</id>
        <label>orf16</label>
    </interactant>
    <organismsDiffer>true</organismsDiffer>
    <experiments>2</experiments>
</comment>
<comment type="interaction">
    <interactant intactId="EBI-11616013">
        <id>Q97SR6</id>
    </interactant>
    <interactant intactId="EBI-11703857">
        <id>E7DN73</id>
    </interactant>
    <organismsDiffer>true</organismsDiffer>
    <experiments>2</experiments>
</comment>
<comment type="interaction">
    <interactant intactId="EBI-11616013">
        <id>Q97SR6</id>
    </interactant>
    <interactant intactId="EBI-3989706">
        <id>E7DN80</id>
    </interactant>
    <organismsDiffer>true</organismsDiffer>
    <experiments>2</experiments>
</comment>
<comment type="interaction">
    <interactant intactId="EBI-11616013">
        <id>Q97SR6</id>
    </interactant>
    <interactant intactId="EBI-11704441">
        <id>E7DN95</id>
    </interactant>
    <organismsDiffer>true</organismsDiffer>
    <experiments>2</experiments>
</comment>
<comment type="interaction">
    <interactant intactId="EBI-11616013">
        <id>Q97SR6</id>
    </interactant>
    <interactant intactId="EBI-11704462">
        <id>E7DN96</id>
    </interactant>
    <organismsDiffer>true</organismsDiffer>
    <experiments>2</experiments>
</comment>
<comment type="interaction">
    <interactant intactId="EBI-11616013">
        <id>Q97SR6</id>
    </interactant>
    <interactant intactId="EBI-11704561">
        <id>E7DNA3</id>
    </interactant>
    <organismsDiffer>true</organismsDiffer>
    <experiments>2</experiments>
</comment>
<comment type="subcellular location">
    <subcellularLocation>
        <location evidence="1">Cytoplasm</location>
    </subcellularLocation>
</comment>
<comment type="domain">
    <text evidence="1">Has 3 domains, the large (RuvB-L) and small ATPase (RuvB-S) domains and the C-terminal head (RuvB-H) domain. The head domain binds DNA, while the ATPase domains jointly bind ATP, ADP or are empty depending on the state of the subunit in the translocation cycle. During a single DNA translocation step the structure of each domain remains the same, but their relative positions change.</text>
</comment>
<comment type="similarity">
    <text evidence="1">Belongs to the RuvB family.</text>
</comment>
<feature type="chain" id="PRO_0000165607" description="Holliday junction branch migration complex subunit RuvB">
    <location>
        <begin position="1"/>
        <end position="332"/>
    </location>
</feature>
<feature type="region of interest" description="Large ATPase domain (RuvB-L)" evidence="1">
    <location>
        <begin position="1"/>
        <end position="181"/>
    </location>
</feature>
<feature type="region of interest" description="Small ATPAse domain (RuvB-S)" evidence="1">
    <location>
        <begin position="182"/>
        <end position="252"/>
    </location>
</feature>
<feature type="region of interest" description="Head domain (RuvB-H)" evidence="1">
    <location>
        <begin position="255"/>
        <end position="332"/>
    </location>
</feature>
<feature type="binding site" evidence="1">
    <location>
        <position position="20"/>
    </location>
    <ligand>
        <name>ATP</name>
        <dbReference type="ChEBI" id="CHEBI:30616"/>
    </ligand>
</feature>
<feature type="binding site" evidence="1">
    <location>
        <position position="21"/>
    </location>
    <ligand>
        <name>ATP</name>
        <dbReference type="ChEBI" id="CHEBI:30616"/>
    </ligand>
</feature>
<feature type="binding site" evidence="1">
    <location>
        <position position="62"/>
    </location>
    <ligand>
        <name>ATP</name>
        <dbReference type="ChEBI" id="CHEBI:30616"/>
    </ligand>
</feature>
<feature type="binding site" evidence="1">
    <location>
        <position position="65"/>
    </location>
    <ligand>
        <name>ATP</name>
        <dbReference type="ChEBI" id="CHEBI:30616"/>
    </ligand>
</feature>
<feature type="binding site" evidence="1">
    <location>
        <position position="66"/>
    </location>
    <ligand>
        <name>ATP</name>
        <dbReference type="ChEBI" id="CHEBI:30616"/>
    </ligand>
</feature>
<feature type="binding site" evidence="1">
    <location>
        <position position="66"/>
    </location>
    <ligand>
        <name>Mg(2+)</name>
        <dbReference type="ChEBI" id="CHEBI:18420"/>
    </ligand>
</feature>
<feature type="binding site" evidence="1">
    <location>
        <position position="67"/>
    </location>
    <ligand>
        <name>ATP</name>
        <dbReference type="ChEBI" id="CHEBI:30616"/>
    </ligand>
</feature>
<feature type="binding site" evidence="1">
    <location>
        <begin position="128"/>
        <end position="130"/>
    </location>
    <ligand>
        <name>ATP</name>
        <dbReference type="ChEBI" id="CHEBI:30616"/>
    </ligand>
</feature>
<feature type="binding site" evidence="1">
    <location>
        <position position="171"/>
    </location>
    <ligand>
        <name>ATP</name>
        <dbReference type="ChEBI" id="CHEBI:30616"/>
    </ligand>
</feature>
<feature type="binding site" evidence="1">
    <location>
        <position position="181"/>
    </location>
    <ligand>
        <name>ATP</name>
        <dbReference type="ChEBI" id="CHEBI:30616"/>
    </ligand>
</feature>
<feature type="binding site" evidence="1">
    <location>
        <position position="218"/>
    </location>
    <ligand>
        <name>ATP</name>
        <dbReference type="ChEBI" id="CHEBI:30616"/>
    </ligand>
</feature>
<feature type="binding site" evidence="1">
    <location>
        <position position="291"/>
    </location>
    <ligand>
        <name>DNA</name>
        <dbReference type="ChEBI" id="CHEBI:16991"/>
    </ligand>
</feature>
<feature type="binding site" evidence="1">
    <location>
        <position position="310"/>
    </location>
    <ligand>
        <name>DNA</name>
        <dbReference type="ChEBI" id="CHEBI:16991"/>
    </ligand>
</feature>
<feature type="binding site" evidence="1">
    <location>
        <position position="312"/>
    </location>
    <ligand>
        <name>DNA</name>
        <dbReference type="ChEBI" id="CHEBI:16991"/>
    </ligand>
</feature>
<feature type="binding site" evidence="1">
    <location>
        <position position="315"/>
    </location>
    <ligand>
        <name>DNA</name>
        <dbReference type="ChEBI" id="CHEBI:16991"/>
    </ligand>
</feature>
<gene>
    <name evidence="1" type="primary">ruvB</name>
    <name type="ordered locus">SP_0259</name>
</gene>
<organism>
    <name type="scientific">Streptococcus pneumoniae serotype 4 (strain ATCC BAA-334 / TIGR4)</name>
    <dbReference type="NCBI Taxonomy" id="170187"/>
    <lineage>
        <taxon>Bacteria</taxon>
        <taxon>Bacillati</taxon>
        <taxon>Bacillota</taxon>
        <taxon>Bacilli</taxon>
        <taxon>Lactobacillales</taxon>
        <taxon>Streptococcaceae</taxon>
        <taxon>Streptococcus</taxon>
    </lineage>
</organism>